<dbReference type="EMBL" id="AM270031">
    <property type="protein sequence ID" value="CAK37876.1"/>
    <property type="molecule type" value="Genomic_DNA"/>
</dbReference>
<dbReference type="RefSeq" id="XP_001400303.1">
    <property type="nucleotide sequence ID" value="XM_001400266.2"/>
</dbReference>
<dbReference type="EnsemblFungi" id="CAK37876">
    <property type="protein sequence ID" value="CAK37876"/>
    <property type="gene ID" value="An02g11750"/>
</dbReference>
<dbReference type="GeneID" id="4979712"/>
<dbReference type="KEGG" id="ang:An02g11750"/>
<dbReference type="VEuPathDB" id="FungiDB:An02g11750"/>
<dbReference type="HOGENOM" id="CLU_067152_1_0_1"/>
<dbReference type="Proteomes" id="UP000006706">
    <property type="component" value="Chromosome 4R"/>
</dbReference>
<dbReference type="GO" id="GO:0005758">
    <property type="term" value="C:mitochondrial intermembrane space"/>
    <property type="evidence" value="ECO:0007669"/>
    <property type="project" value="UniProtKB-SubCell"/>
</dbReference>
<dbReference type="GO" id="GO:0051537">
    <property type="term" value="F:2 iron, 2 sulfur cluster binding"/>
    <property type="evidence" value="ECO:0007669"/>
    <property type="project" value="UniProtKB-UniRule"/>
</dbReference>
<dbReference type="GO" id="GO:0051539">
    <property type="term" value="F:4 iron, 4 sulfur cluster binding"/>
    <property type="evidence" value="ECO:0007669"/>
    <property type="project" value="UniProtKB-KW"/>
</dbReference>
<dbReference type="GO" id="GO:0009055">
    <property type="term" value="F:electron transfer activity"/>
    <property type="evidence" value="ECO:0007669"/>
    <property type="project" value="UniProtKB-UniRule"/>
</dbReference>
<dbReference type="GO" id="GO:0046872">
    <property type="term" value="F:metal ion binding"/>
    <property type="evidence" value="ECO:0007669"/>
    <property type="project" value="UniProtKB-KW"/>
</dbReference>
<dbReference type="GO" id="GO:0016226">
    <property type="term" value="P:iron-sulfur cluster assembly"/>
    <property type="evidence" value="ECO:0007669"/>
    <property type="project" value="UniProtKB-UniRule"/>
</dbReference>
<dbReference type="Gene3D" id="3.40.50.11000">
    <property type="entry name" value="Fe-S cluster assembly protein Dre2, N-terminal domain"/>
    <property type="match status" value="1"/>
</dbReference>
<dbReference type="HAMAP" id="MF_03115">
    <property type="entry name" value="Anamorsin"/>
    <property type="match status" value="1"/>
</dbReference>
<dbReference type="InterPro" id="IPR007785">
    <property type="entry name" value="Anamorsin"/>
</dbReference>
<dbReference type="InterPro" id="IPR046408">
    <property type="entry name" value="CIAPIN1"/>
</dbReference>
<dbReference type="InterPro" id="IPR031838">
    <property type="entry name" value="Dre2_N"/>
</dbReference>
<dbReference type="PANTHER" id="PTHR13273">
    <property type="entry name" value="ANAMORSIN"/>
    <property type="match status" value="1"/>
</dbReference>
<dbReference type="PANTHER" id="PTHR13273:SF14">
    <property type="entry name" value="ANAMORSIN"/>
    <property type="match status" value="1"/>
</dbReference>
<dbReference type="Pfam" id="PF05093">
    <property type="entry name" value="CIAPIN1"/>
    <property type="match status" value="1"/>
</dbReference>
<dbReference type="Pfam" id="PF16803">
    <property type="entry name" value="DRE2_N"/>
    <property type="match status" value="1"/>
</dbReference>
<accession>A2QEP2</accession>
<protein>
    <recommendedName>
        <fullName evidence="1">Fe-S cluster assembly protein dre2</fullName>
    </recommendedName>
    <alternativeName>
        <fullName evidence="1">Anamorsin homolog</fullName>
    </alternativeName>
</protein>
<sequence length="324" mass="35425">MAPSFVTIDTTPDFDMAPAPSFQPMSTGSPSKRTLLLAPPSIATQEEKLRDLFTAFDRSTTDLQMLDRISAGFVSLPANTYDHILVLTDTDGTRRSEALHLLTRDVYTALVPCMKAGAKLQTQDNFFGEAEEREAVLAGLIKTDAGFEKMDQPKSFAIPLRRNGKKKDAAKTETFAPAPAPAPPVQPVTVGMINNDDDYENDDDLIDEDTLLSDEDLKRPIQPPECQPKPGRRRRACKDCTCGLAARLEAEEQAEREKADKALNVMKLETEDLNELDFTVQGKTGSCGNCALGDAFRCAGCPFIGLPAFKPGQEVQILENVAQL</sequence>
<reference key="1">
    <citation type="journal article" date="2007" name="Nat. Biotechnol.">
        <title>Genome sequencing and analysis of the versatile cell factory Aspergillus niger CBS 513.88.</title>
        <authorList>
            <person name="Pel H.J."/>
            <person name="de Winde J.H."/>
            <person name="Archer D.B."/>
            <person name="Dyer P.S."/>
            <person name="Hofmann G."/>
            <person name="Schaap P.J."/>
            <person name="Turner G."/>
            <person name="de Vries R.P."/>
            <person name="Albang R."/>
            <person name="Albermann K."/>
            <person name="Andersen M.R."/>
            <person name="Bendtsen J.D."/>
            <person name="Benen J.A.E."/>
            <person name="van den Berg M."/>
            <person name="Breestraat S."/>
            <person name="Caddick M.X."/>
            <person name="Contreras R."/>
            <person name="Cornell M."/>
            <person name="Coutinho P.M."/>
            <person name="Danchin E.G.J."/>
            <person name="Debets A.J.M."/>
            <person name="Dekker P."/>
            <person name="van Dijck P.W.M."/>
            <person name="van Dijk A."/>
            <person name="Dijkhuizen L."/>
            <person name="Driessen A.J.M."/>
            <person name="d'Enfert C."/>
            <person name="Geysens S."/>
            <person name="Goosen C."/>
            <person name="Groot G.S.P."/>
            <person name="de Groot P.W.J."/>
            <person name="Guillemette T."/>
            <person name="Henrissat B."/>
            <person name="Herweijer M."/>
            <person name="van den Hombergh J.P.T.W."/>
            <person name="van den Hondel C.A.M.J.J."/>
            <person name="van der Heijden R.T.J.M."/>
            <person name="van der Kaaij R.M."/>
            <person name="Klis F.M."/>
            <person name="Kools H.J."/>
            <person name="Kubicek C.P."/>
            <person name="van Kuyk P.A."/>
            <person name="Lauber J."/>
            <person name="Lu X."/>
            <person name="van der Maarel M.J.E.C."/>
            <person name="Meulenberg R."/>
            <person name="Menke H."/>
            <person name="Mortimer M.A."/>
            <person name="Nielsen J."/>
            <person name="Oliver S.G."/>
            <person name="Olsthoorn M."/>
            <person name="Pal K."/>
            <person name="van Peij N.N.M.E."/>
            <person name="Ram A.F.J."/>
            <person name="Rinas U."/>
            <person name="Roubos J.A."/>
            <person name="Sagt C.M.J."/>
            <person name="Schmoll M."/>
            <person name="Sun J."/>
            <person name="Ussery D."/>
            <person name="Varga J."/>
            <person name="Vervecken W."/>
            <person name="van de Vondervoort P.J.J."/>
            <person name="Wedler H."/>
            <person name="Woesten H.A.B."/>
            <person name="Zeng A.-P."/>
            <person name="van Ooyen A.J.J."/>
            <person name="Visser J."/>
            <person name="Stam H."/>
        </authorList>
    </citation>
    <scope>NUCLEOTIDE SEQUENCE [LARGE SCALE GENOMIC DNA]</scope>
    <source>
        <strain>ATCC MYA-4892 / CBS 513.88 / FGSC A1513</strain>
    </source>
</reference>
<gene>
    <name evidence="1" type="primary">dre2</name>
    <name type="ORF">An02g11750</name>
</gene>
<evidence type="ECO:0000255" key="1">
    <source>
        <dbReference type="HAMAP-Rule" id="MF_03115"/>
    </source>
</evidence>
<name>DRE2_ASPNC</name>
<proteinExistence type="inferred from homology"/>
<feature type="chain" id="PRO_0000324856" description="Fe-S cluster assembly protein dre2">
    <location>
        <begin position="1"/>
        <end position="324"/>
    </location>
</feature>
<feature type="region of interest" description="N-terminal SAM-like domain" evidence="1">
    <location>
        <begin position="28"/>
        <end position="158"/>
    </location>
</feature>
<feature type="region of interest" description="Linker" evidence="1">
    <location>
        <begin position="159"/>
        <end position="217"/>
    </location>
</feature>
<feature type="region of interest" description="Fe-S binding site A" evidence="1">
    <location>
        <begin position="226"/>
        <end position="242"/>
    </location>
</feature>
<feature type="region of interest" description="Fe-S binding site B" evidence="1">
    <location>
        <begin position="287"/>
        <end position="301"/>
    </location>
</feature>
<feature type="short sequence motif" description="Cx2C motif 1" evidence="1">
    <location>
        <begin position="287"/>
        <end position="290"/>
    </location>
</feature>
<feature type="short sequence motif" description="Cx2C motif 2" evidence="1">
    <location>
        <begin position="298"/>
        <end position="301"/>
    </location>
</feature>
<feature type="binding site" evidence="1">
    <location>
        <position position="226"/>
    </location>
    <ligand>
        <name>[2Fe-2S] cluster</name>
        <dbReference type="ChEBI" id="CHEBI:190135"/>
    </ligand>
</feature>
<feature type="binding site" evidence="1">
    <location>
        <position position="237"/>
    </location>
    <ligand>
        <name>[2Fe-2S] cluster</name>
        <dbReference type="ChEBI" id="CHEBI:190135"/>
    </ligand>
</feature>
<feature type="binding site" evidence="1">
    <location>
        <position position="240"/>
    </location>
    <ligand>
        <name>[2Fe-2S] cluster</name>
        <dbReference type="ChEBI" id="CHEBI:190135"/>
    </ligand>
</feature>
<feature type="binding site" evidence="1">
    <location>
        <position position="242"/>
    </location>
    <ligand>
        <name>[2Fe-2S] cluster</name>
        <dbReference type="ChEBI" id="CHEBI:190135"/>
    </ligand>
</feature>
<feature type="binding site" evidence="1">
    <location>
        <position position="287"/>
    </location>
    <ligand>
        <name>[4Fe-4S] cluster</name>
        <dbReference type="ChEBI" id="CHEBI:49883"/>
    </ligand>
</feature>
<feature type="binding site" evidence="1">
    <location>
        <position position="290"/>
    </location>
    <ligand>
        <name>[4Fe-4S] cluster</name>
        <dbReference type="ChEBI" id="CHEBI:49883"/>
    </ligand>
</feature>
<feature type="binding site" evidence="1">
    <location>
        <position position="298"/>
    </location>
    <ligand>
        <name>[4Fe-4S] cluster</name>
        <dbReference type="ChEBI" id="CHEBI:49883"/>
    </ligand>
</feature>
<feature type="binding site" evidence="1">
    <location>
        <position position="301"/>
    </location>
    <ligand>
        <name>[4Fe-4S] cluster</name>
        <dbReference type="ChEBI" id="CHEBI:49883"/>
    </ligand>
</feature>
<keyword id="KW-0001">2Fe-2S</keyword>
<keyword id="KW-0004">4Fe-4S</keyword>
<keyword id="KW-0963">Cytoplasm</keyword>
<keyword id="KW-0408">Iron</keyword>
<keyword id="KW-0411">Iron-sulfur</keyword>
<keyword id="KW-0479">Metal-binding</keyword>
<keyword id="KW-0496">Mitochondrion</keyword>
<keyword id="KW-1185">Reference proteome</keyword>
<comment type="function">
    <text evidence="1">Component of the cytosolic iron-sulfur (Fe-S) protein assembly (CIA) machinery required for the maturation of extramitochondrial Fe-S proteins. Part of an electron transfer chain functioning in an early step of cytosolic Fe-S biogenesis, facilitating the de novo assembly of a [4Fe-4S] cluster on the scaffold complex cfd1-nbp35. Electrons are transferred to dre2 from NADPH via the FAD- and FMN-containing protein tah18. Tah18-dre2 are also required for the assembly of the diferric tyrosyl radical cofactor of ribonucleotide reductase (RNR), probably by providing electrons for reduction during radical cofactor maturation in the catalytic small subunit rnr2.</text>
</comment>
<comment type="cofactor">
    <cofactor evidence="1">
        <name>[2Fe-2S] cluster</name>
        <dbReference type="ChEBI" id="CHEBI:190135"/>
    </cofactor>
</comment>
<comment type="cofactor">
    <cofactor evidence="1">
        <name>[4Fe-4S] cluster</name>
        <dbReference type="ChEBI" id="CHEBI:49883"/>
    </cofactor>
</comment>
<comment type="subunit">
    <text evidence="1">Monomer. Interacts with tah18. Interacts with mia40.</text>
</comment>
<comment type="subcellular location">
    <subcellularLocation>
        <location evidence="1">Cytoplasm</location>
    </subcellularLocation>
    <subcellularLocation>
        <location evidence="1">Mitochondrion intermembrane space</location>
    </subcellularLocation>
</comment>
<comment type="domain">
    <text evidence="1">The C-terminal domain binds 2 Fe-S clusters but is otherwise mostly in an intrinsically disordered conformation.</text>
</comment>
<comment type="domain">
    <text evidence="1">The N-terminal domain has structural similarity with S-adenosyl-L-methionine-dependent methyltransferases, but does not bind S-adenosyl-L-methionine. It is required for correct assembly of the 2 Fe-S clusters.</text>
</comment>
<comment type="domain">
    <text evidence="1">The twin Cx2C motifs are involved in the recognition by the mitochondrial mia40-erv1 disulfide relay system. The formation of 2 disulfide bonds in the Cx2C motifs through dithiol/disulfide exchange reactions effectively traps the protein in the mitochondrial intermembrane space.</text>
</comment>
<comment type="similarity">
    <text evidence="1">Belongs to the anamorsin family.</text>
</comment>
<organism>
    <name type="scientific">Aspergillus niger (strain ATCC MYA-4892 / CBS 513.88 / FGSC A1513)</name>
    <dbReference type="NCBI Taxonomy" id="425011"/>
    <lineage>
        <taxon>Eukaryota</taxon>
        <taxon>Fungi</taxon>
        <taxon>Dikarya</taxon>
        <taxon>Ascomycota</taxon>
        <taxon>Pezizomycotina</taxon>
        <taxon>Eurotiomycetes</taxon>
        <taxon>Eurotiomycetidae</taxon>
        <taxon>Eurotiales</taxon>
        <taxon>Aspergillaceae</taxon>
        <taxon>Aspergillus</taxon>
        <taxon>Aspergillus subgen. Circumdati</taxon>
    </lineage>
</organism>